<reference key="1">
    <citation type="submission" date="2003-03" db="EMBL/GenBank/DDBJ databases">
        <title>African swine fever virus genomes.</title>
        <authorList>
            <person name="Kutish G.F."/>
            <person name="Rock D.L."/>
        </authorList>
    </citation>
    <scope>NUCLEOTIDE SEQUENCE [LARGE SCALE GENOMIC DNA]</scope>
</reference>
<accession>P0C9L1</accession>
<organism>
    <name type="scientific">African swine fever virus (isolate Tick/South Africa/Pretoriuskop Pr4/1996)</name>
    <name type="common">ASFV</name>
    <dbReference type="NCBI Taxonomy" id="561443"/>
    <lineage>
        <taxon>Viruses</taxon>
        <taxon>Varidnaviria</taxon>
        <taxon>Bamfordvirae</taxon>
        <taxon>Nucleocytoviricota</taxon>
        <taxon>Pokkesviricetes</taxon>
        <taxon>Asfuvirales</taxon>
        <taxon>Asfarviridae</taxon>
        <taxon>Asfivirus</taxon>
        <taxon>African swine fever virus</taxon>
    </lineage>
</organism>
<comment type="function">
    <text evidence="1">Plays a role in virus cell tropism, and may be required for efficient virus replication in macrophages.</text>
</comment>
<comment type="similarity">
    <text evidence="2">Belongs to the asfivirus MGF 300 family.</text>
</comment>
<protein>
    <recommendedName>
        <fullName>Protein MGF 300-2R</fullName>
    </recommendedName>
</protein>
<gene>
    <name type="ordered locus">Pret-028</name>
</gene>
<dbReference type="EMBL" id="AY261363">
    <property type="status" value="NOT_ANNOTATED_CDS"/>
    <property type="molecule type" value="Genomic_DNA"/>
</dbReference>
<dbReference type="Proteomes" id="UP000000859">
    <property type="component" value="Segment"/>
</dbReference>
<organismHost>
    <name type="scientific">Ornithodoros</name>
    <name type="common">relapsing fever ticks</name>
    <dbReference type="NCBI Taxonomy" id="6937"/>
</organismHost>
<organismHost>
    <name type="scientific">Phacochoerus aethiopicus</name>
    <name type="common">Warthog</name>
    <dbReference type="NCBI Taxonomy" id="85517"/>
</organismHost>
<organismHost>
    <name type="scientific">Phacochoerus africanus</name>
    <name type="common">Warthog</name>
    <dbReference type="NCBI Taxonomy" id="41426"/>
</organismHost>
<organismHost>
    <name type="scientific">Potamochoerus larvatus</name>
    <name type="common">Bushpig</name>
    <dbReference type="NCBI Taxonomy" id="273792"/>
</organismHost>
<organismHost>
    <name type="scientific">Sus scrofa</name>
    <name type="common">Pig</name>
    <dbReference type="NCBI Taxonomy" id="9823"/>
</organismHost>
<evidence type="ECO:0000250" key="1"/>
<evidence type="ECO:0000305" key="2"/>
<feature type="chain" id="PRO_0000373235" description="Protein MGF 300-2R">
    <location>
        <begin position="1"/>
        <end position="160"/>
    </location>
</feature>
<name>3002R_ASFP4</name>
<proteinExistence type="inferred from homology"/>
<sequence>MITLYEAAIKTLITHRKQILKHPDSREILLALGLYWDKTHILVKCRECGKMSLTGKHSTKCININCLLILAIKKKNKRMVDTLIRMGADVTYIHLLKNKIKLSYNQLSMLKSNSQISLKELHAICYLLYGRLPKKIKQGMQLCKTMAGLCGELLCAFLAP</sequence>